<protein>
    <recommendedName>
        <fullName evidence="2">Large ribosomal subunit protein bL20c</fullName>
    </recommendedName>
    <alternativeName>
        <fullName>50S ribosomal protein L20, chloroplastic</fullName>
    </alternativeName>
</protein>
<reference key="1">
    <citation type="journal article" date="1992" name="Plant Mol. Biol.">
        <title>Nucleotide sequence of a region of maize chloroplast DNA containing the 3' end of clpP, exon 1 of rps12 and rpl20 and their cotranscription.</title>
        <authorList>
            <person name="Weglohner W."/>
            <person name="Subramanian A.R."/>
        </authorList>
    </citation>
    <scope>NUCLEOTIDE SEQUENCE [LARGE SCALE GENOMIC DNA]</scope>
    <source>
        <strain>cv. B73</strain>
        <tissue>Leaf</tissue>
    </source>
</reference>
<reference key="2">
    <citation type="journal article" date="1995" name="J. Mol. Biol.">
        <title>Complete sequence of the maize chloroplast genome: gene content, hotspots of divergence and fine tuning of genetic information by transcript editing.</title>
        <authorList>
            <person name="Maier R.M."/>
            <person name="Neckermann K."/>
            <person name="Igloi G.L."/>
            <person name="Koessel H."/>
        </authorList>
    </citation>
    <scope>NUCLEOTIDE SEQUENCE [LARGE SCALE GENOMIC DNA]</scope>
    <source>
        <strain>cv. B73</strain>
    </source>
</reference>
<accession>P26566</accession>
<name>RK20_MAIZE</name>
<organism>
    <name type="scientific">Zea mays</name>
    <name type="common">Maize</name>
    <dbReference type="NCBI Taxonomy" id="4577"/>
    <lineage>
        <taxon>Eukaryota</taxon>
        <taxon>Viridiplantae</taxon>
        <taxon>Streptophyta</taxon>
        <taxon>Embryophyta</taxon>
        <taxon>Tracheophyta</taxon>
        <taxon>Spermatophyta</taxon>
        <taxon>Magnoliopsida</taxon>
        <taxon>Liliopsida</taxon>
        <taxon>Poales</taxon>
        <taxon>Poaceae</taxon>
        <taxon>PACMAD clade</taxon>
        <taxon>Panicoideae</taxon>
        <taxon>Andropogonodae</taxon>
        <taxon>Andropogoneae</taxon>
        <taxon>Tripsacinae</taxon>
        <taxon>Zea</taxon>
    </lineage>
</organism>
<proteinExistence type="inferred from homology"/>
<gene>
    <name type="primary">rpl20</name>
</gene>
<evidence type="ECO:0000250" key="1"/>
<evidence type="ECO:0000305" key="2"/>
<dbReference type="EMBL" id="X60548">
    <property type="protein sequence ID" value="CAA43040.1"/>
    <property type="molecule type" value="Genomic_DNA"/>
</dbReference>
<dbReference type="EMBL" id="X86563">
    <property type="protein sequence ID" value="CAA60308.1"/>
    <property type="molecule type" value="Genomic_DNA"/>
</dbReference>
<dbReference type="PIR" id="S19128">
    <property type="entry name" value="R5ZM20"/>
</dbReference>
<dbReference type="RefSeq" id="NP_043047.1">
    <property type="nucleotide sequence ID" value="NC_001666.2"/>
</dbReference>
<dbReference type="SMR" id="P26566"/>
<dbReference type="FunCoup" id="P26566">
    <property type="interactions" value="181"/>
</dbReference>
<dbReference type="STRING" id="4577.P26566"/>
<dbReference type="PaxDb" id="4577-GRMZM2G025396_P01"/>
<dbReference type="GeneID" id="845217"/>
<dbReference type="KEGG" id="zma:845217"/>
<dbReference type="MaizeGDB" id="67051"/>
<dbReference type="eggNOG" id="KOG4707">
    <property type="taxonomic scope" value="Eukaryota"/>
</dbReference>
<dbReference type="InParanoid" id="P26566"/>
<dbReference type="OrthoDB" id="512793at2759"/>
<dbReference type="Proteomes" id="UP000007305">
    <property type="component" value="Chloroplast"/>
</dbReference>
<dbReference type="GO" id="GO:0009507">
    <property type="term" value="C:chloroplast"/>
    <property type="evidence" value="ECO:0007669"/>
    <property type="project" value="UniProtKB-SubCell"/>
</dbReference>
<dbReference type="GO" id="GO:1990904">
    <property type="term" value="C:ribonucleoprotein complex"/>
    <property type="evidence" value="ECO:0007669"/>
    <property type="project" value="UniProtKB-KW"/>
</dbReference>
<dbReference type="GO" id="GO:0005840">
    <property type="term" value="C:ribosome"/>
    <property type="evidence" value="ECO:0007669"/>
    <property type="project" value="UniProtKB-KW"/>
</dbReference>
<dbReference type="GO" id="GO:0019843">
    <property type="term" value="F:rRNA binding"/>
    <property type="evidence" value="ECO:0007669"/>
    <property type="project" value="UniProtKB-UniRule"/>
</dbReference>
<dbReference type="GO" id="GO:0003735">
    <property type="term" value="F:structural constituent of ribosome"/>
    <property type="evidence" value="ECO:0000318"/>
    <property type="project" value="GO_Central"/>
</dbReference>
<dbReference type="GO" id="GO:0000027">
    <property type="term" value="P:ribosomal large subunit assembly"/>
    <property type="evidence" value="ECO:0007669"/>
    <property type="project" value="UniProtKB-UniRule"/>
</dbReference>
<dbReference type="GO" id="GO:0006412">
    <property type="term" value="P:translation"/>
    <property type="evidence" value="ECO:0007669"/>
    <property type="project" value="InterPro"/>
</dbReference>
<dbReference type="CDD" id="cd07026">
    <property type="entry name" value="Ribosomal_L20"/>
    <property type="match status" value="1"/>
</dbReference>
<dbReference type="FunFam" id="1.10.1900.20:FF:000002">
    <property type="entry name" value="50S ribosomal protein L20, chloroplastic"/>
    <property type="match status" value="1"/>
</dbReference>
<dbReference type="Gene3D" id="6.10.160.10">
    <property type="match status" value="1"/>
</dbReference>
<dbReference type="Gene3D" id="1.10.1900.20">
    <property type="entry name" value="Ribosomal protein L20"/>
    <property type="match status" value="1"/>
</dbReference>
<dbReference type="HAMAP" id="MF_00382">
    <property type="entry name" value="Ribosomal_bL20"/>
    <property type="match status" value="1"/>
</dbReference>
<dbReference type="InterPro" id="IPR005813">
    <property type="entry name" value="Ribosomal_bL20"/>
</dbReference>
<dbReference type="InterPro" id="IPR049946">
    <property type="entry name" value="RIBOSOMAL_L20_CS"/>
</dbReference>
<dbReference type="InterPro" id="IPR035566">
    <property type="entry name" value="Ribosomal_protein_bL20_C"/>
</dbReference>
<dbReference type="NCBIfam" id="TIGR01032">
    <property type="entry name" value="rplT_bact"/>
    <property type="match status" value="1"/>
</dbReference>
<dbReference type="PANTHER" id="PTHR10986">
    <property type="entry name" value="39S RIBOSOMAL PROTEIN L20"/>
    <property type="match status" value="1"/>
</dbReference>
<dbReference type="Pfam" id="PF00453">
    <property type="entry name" value="Ribosomal_L20"/>
    <property type="match status" value="1"/>
</dbReference>
<dbReference type="PRINTS" id="PR00062">
    <property type="entry name" value="RIBOSOMALL20"/>
</dbReference>
<dbReference type="SUPFAM" id="SSF74731">
    <property type="entry name" value="Ribosomal protein L20"/>
    <property type="match status" value="1"/>
</dbReference>
<dbReference type="PROSITE" id="PS00937">
    <property type="entry name" value="RIBOSOMAL_L20"/>
    <property type="match status" value="1"/>
</dbReference>
<geneLocation type="chloroplast"/>
<sequence>MTRVPRGYIARRRRTKMRSFASNFRGAHLRLNRVITQQVRRAFVSSHRDRGRQKRDFRRLWITRINAATRVYNVFNSYSKLIHNLSKKELILNRKMLAQVAVSNPNNLYTISNKIRIIN</sequence>
<keyword id="KW-0150">Chloroplast</keyword>
<keyword id="KW-0934">Plastid</keyword>
<keyword id="KW-1185">Reference proteome</keyword>
<keyword id="KW-0687">Ribonucleoprotein</keyword>
<keyword id="KW-0689">Ribosomal protein</keyword>
<keyword id="KW-0694">RNA-binding</keyword>
<keyword id="KW-0699">rRNA-binding</keyword>
<comment type="function">
    <text evidence="1">Binds directly to 23S ribosomal RNA and is necessary for the in vitro assembly process of the 50S ribosomal subunit. It is not involved in the protein synthesizing functions of that subunit (By similarity).</text>
</comment>
<comment type="subcellular location">
    <subcellularLocation>
        <location>Plastid</location>
        <location>Chloroplast</location>
    </subcellularLocation>
</comment>
<comment type="similarity">
    <text evidence="2">Belongs to the bacterial ribosomal protein bL20 family.</text>
</comment>
<feature type="initiator methionine" description="Removed" evidence="1">
    <location>
        <position position="1"/>
    </location>
</feature>
<feature type="chain" id="PRO_0000177293" description="Large ribosomal subunit protein bL20c">
    <location>
        <begin position="2"/>
        <end position="119"/>
    </location>
</feature>